<protein>
    <recommendedName>
        <fullName>Threonine/homoserine exporter RhtA</fullName>
    </recommendedName>
</protein>
<dbReference type="EMBL" id="AE005174">
    <property type="protein sequence ID" value="AAG55185.1"/>
    <property type="molecule type" value="Genomic_DNA"/>
</dbReference>
<dbReference type="EMBL" id="BA000007">
    <property type="protein sequence ID" value="BAB34314.1"/>
    <property type="molecule type" value="Genomic_DNA"/>
</dbReference>
<dbReference type="PIR" id="C90740">
    <property type="entry name" value="C90740"/>
</dbReference>
<dbReference type="PIR" id="E85590">
    <property type="entry name" value="E85590"/>
</dbReference>
<dbReference type="RefSeq" id="NP_308918.1">
    <property type="nucleotide sequence ID" value="NC_002695.1"/>
</dbReference>
<dbReference type="RefSeq" id="WP_001295297.1">
    <property type="nucleotide sequence ID" value="NZ_VOAI01000006.1"/>
</dbReference>
<dbReference type="SMR" id="P0AA69"/>
<dbReference type="STRING" id="155864.Z1035"/>
<dbReference type="GeneID" id="917633"/>
<dbReference type="GeneID" id="93776615"/>
<dbReference type="KEGG" id="ece:Z1035"/>
<dbReference type="KEGG" id="ecs:ECs_0891"/>
<dbReference type="PATRIC" id="fig|386585.9.peg.1005"/>
<dbReference type="eggNOG" id="COG5006">
    <property type="taxonomic scope" value="Bacteria"/>
</dbReference>
<dbReference type="HOGENOM" id="CLU_057295_0_1_6"/>
<dbReference type="OMA" id="MWAAYIV"/>
<dbReference type="Proteomes" id="UP000000558">
    <property type="component" value="Chromosome"/>
</dbReference>
<dbReference type="Proteomes" id="UP000002519">
    <property type="component" value="Chromosome"/>
</dbReference>
<dbReference type="GO" id="GO:0005886">
    <property type="term" value="C:plasma membrane"/>
    <property type="evidence" value="ECO:0007669"/>
    <property type="project" value="UniProtKB-SubCell"/>
</dbReference>
<dbReference type="GO" id="GO:0006865">
    <property type="term" value="P:amino acid transport"/>
    <property type="evidence" value="ECO:0007669"/>
    <property type="project" value="UniProtKB-KW"/>
</dbReference>
<dbReference type="InterPro" id="IPR050638">
    <property type="entry name" value="AA-Vitamin_Transporters"/>
</dbReference>
<dbReference type="InterPro" id="IPR000620">
    <property type="entry name" value="EamA_dom"/>
</dbReference>
<dbReference type="NCBIfam" id="NF007823">
    <property type="entry name" value="PRK10532.1"/>
    <property type="match status" value="1"/>
</dbReference>
<dbReference type="PANTHER" id="PTHR32322">
    <property type="entry name" value="INNER MEMBRANE TRANSPORTER"/>
    <property type="match status" value="1"/>
</dbReference>
<dbReference type="PANTHER" id="PTHR32322:SF18">
    <property type="entry name" value="S-ADENOSYLMETHIONINE_S-ADENOSYLHOMOCYSTEINE TRANSPORTER"/>
    <property type="match status" value="1"/>
</dbReference>
<dbReference type="Pfam" id="PF00892">
    <property type="entry name" value="EamA"/>
    <property type="match status" value="1"/>
</dbReference>
<dbReference type="SUPFAM" id="SSF103481">
    <property type="entry name" value="Multidrug resistance efflux transporter EmrE"/>
    <property type="match status" value="2"/>
</dbReference>
<organism>
    <name type="scientific">Escherichia coli O157:H7</name>
    <dbReference type="NCBI Taxonomy" id="83334"/>
    <lineage>
        <taxon>Bacteria</taxon>
        <taxon>Pseudomonadati</taxon>
        <taxon>Pseudomonadota</taxon>
        <taxon>Gammaproteobacteria</taxon>
        <taxon>Enterobacterales</taxon>
        <taxon>Enterobacteriaceae</taxon>
        <taxon>Escherichia</taxon>
    </lineage>
</organism>
<keyword id="KW-0029">Amino-acid transport</keyword>
<keyword id="KW-0997">Cell inner membrane</keyword>
<keyword id="KW-1003">Cell membrane</keyword>
<keyword id="KW-0472">Membrane</keyword>
<keyword id="KW-1185">Reference proteome</keyword>
<keyword id="KW-0677">Repeat</keyword>
<keyword id="KW-0812">Transmembrane</keyword>
<keyword id="KW-1133">Transmembrane helix</keyword>
<keyword id="KW-0813">Transport</keyword>
<gene>
    <name type="primary">rhtA</name>
    <name type="ordered locus">Z1035</name>
    <name type="ordered locus">ECs0891</name>
</gene>
<name>RHTA_ECO57</name>
<proteinExistence type="inferred from homology"/>
<accession>P0AA69</accession>
<accession>P36545</accession>
<accession>P75784</accession>
<comment type="function">
    <text evidence="1">Involved in the efflux of threonine and homoserine.</text>
</comment>
<comment type="subcellular location">
    <subcellularLocation>
        <location evidence="1">Cell inner membrane</location>
        <topology evidence="1">Multi-pass membrane protein</topology>
    </subcellularLocation>
</comment>
<comment type="similarity">
    <text evidence="3">Belongs to the drug/metabolite transporter (DMT) superfamily. 10 TMS drug/metabolite exporter (DME) (TC 2.A.7.3) family.</text>
</comment>
<evidence type="ECO:0000250" key="1"/>
<evidence type="ECO:0000255" key="2"/>
<evidence type="ECO:0000305" key="3"/>
<sequence>MPGSLRKMPVWLPIVILLVAMASIQGGASLAKSLFPLVGAPGVTALRLALGTLILIAFFKPWRLRFAKEQRLPLLFYGVSLGGMNYLFYLSIQTVPLGIAVALEFTGPLAVALFSSRRPVDFVWVVLAVLGLWFLLPLGQDVSHVDLTGCALALGAGACWAIYILSGQRAGAEHGPATVAIGSLIAALIFVPIGALQAGEALWHWSVIPLGLAVAILSTALPYSLEMIALTRLPTRTFGTLMSMEPALAAVSGMIFLGETLTPIQLLALGAIIAASMGSTLTVRKESKIKELDIN</sequence>
<reference key="1">
    <citation type="journal article" date="2001" name="Nature">
        <title>Genome sequence of enterohaemorrhagic Escherichia coli O157:H7.</title>
        <authorList>
            <person name="Perna N.T."/>
            <person name="Plunkett G. III"/>
            <person name="Burland V."/>
            <person name="Mau B."/>
            <person name="Glasner J.D."/>
            <person name="Rose D.J."/>
            <person name="Mayhew G.F."/>
            <person name="Evans P.S."/>
            <person name="Gregor J."/>
            <person name="Kirkpatrick H.A."/>
            <person name="Posfai G."/>
            <person name="Hackett J."/>
            <person name="Klink S."/>
            <person name="Boutin A."/>
            <person name="Shao Y."/>
            <person name="Miller L."/>
            <person name="Grotbeck E.J."/>
            <person name="Davis N.W."/>
            <person name="Lim A."/>
            <person name="Dimalanta E.T."/>
            <person name="Potamousis K."/>
            <person name="Apodaca J."/>
            <person name="Anantharaman T.S."/>
            <person name="Lin J."/>
            <person name="Yen G."/>
            <person name="Schwartz D.C."/>
            <person name="Welch R.A."/>
            <person name="Blattner F.R."/>
        </authorList>
    </citation>
    <scope>NUCLEOTIDE SEQUENCE [LARGE SCALE GENOMIC DNA]</scope>
    <source>
        <strain>O157:H7 / EDL933 / ATCC 700927 / EHEC</strain>
    </source>
</reference>
<reference key="2">
    <citation type="journal article" date="2001" name="DNA Res.">
        <title>Complete genome sequence of enterohemorrhagic Escherichia coli O157:H7 and genomic comparison with a laboratory strain K-12.</title>
        <authorList>
            <person name="Hayashi T."/>
            <person name="Makino K."/>
            <person name="Ohnishi M."/>
            <person name="Kurokawa K."/>
            <person name="Ishii K."/>
            <person name="Yokoyama K."/>
            <person name="Han C.-G."/>
            <person name="Ohtsubo E."/>
            <person name="Nakayama K."/>
            <person name="Murata T."/>
            <person name="Tanaka M."/>
            <person name="Tobe T."/>
            <person name="Iida T."/>
            <person name="Takami H."/>
            <person name="Honda T."/>
            <person name="Sasakawa C."/>
            <person name="Ogasawara N."/>
            <person name="Yasunaga T."/>
            <person name="Kuhara S."/>
            <person name="Shiba T."/>
            <person name="Hattori M."/>
            <person name="Shinagawa H."/>
        </authorList>
    </citation>
    <scope>NUCLEOTIDE SEQUENCE [LARGE SCALE GENOMIC DNA]</scope>
    <source>
        <strain>O157:H7 / Sakai / RIMD 0509952 / EHEC</strain>
    </source>
</reference>
<feature type="chain" id="PRO_0000108164" description="Threonine/homoserine exporter RhtA">
    <location>
        <begin position="1"/>
        <end position="295"/>
    </location>
</feature>
<feature type="topological domain" description="Cytoplasmic" evidence="2">
    <location>
        <begin position="1"/>
        <end position="9"/>
    </location>
</feature>
<feature type="transmembrane region" description="Helical" evidence="2">
    <location>
        <begin position="10"/>
        <end position="30"/>
    </location>
</feature>
<feature type="topological domain" description="Periplasmic" evidence="2">
    <location>
        <begin position="31"/>
        <end position="38"/>
    </location>
</feature>
<feature type="transmembrane region" description="Helical" evidence="2">
    <location>
        <begin position="39"/>
        <end position="59"/>
    </location>
</feature>
<feature type="topological domain" description="Cytoplasmic" evidence="2">
    <location>
        <begin position="60"/>
        <end position="71"/>
    </location>
</feature>
<feature type="transmembrane region" description="Helical" evidence="2">
    <location>
        <begin position="72"/>
        <end position="92"/>
    </location>
</feature>
<feature type="topological domain" description="Periplasmic" evidence="2">
    <location>
        <position position="93"/>
    </location>
</feature>
<feature type="transmembrane region" description="Helical" evidence="2">
    <location>
        <begin position="94"/>
        <end position="114"/>
    </location>
</feature>
<feature type="topological domain" description="Cytoplasmic" evidence="2">
    <location>
        <begin position="115"/>
        <end position="118"/>
    </location>
</feature>
<feature type="transmembrane region" description="Helical" evidence="2">
    <location>
        <begin position="119"/>
        <end position="139"/>
    </location>
</feature>
<feature type="topological domain" description="Periplasmic" evidence="2">
    <location>
        <begin position="140"/>
        <end position="146"/>
    </location>
</feature>
<feature type="transmembrane region" description="Helical" evidence="2">
    <location>
        <begin position="147"/>
        <end position="167"/>
    </location>
</feature>
<feature type="topological domain" description="Cytoplasmic" evidence="2">
    <location>
        <begin position="168"/>
        <end position="175"/>
    </location>
</feature>
<feature type="transmembrane region" description="Helical" evidence="2">
    <location>
        <begin position="176"/>
        <end position="196"/>
    </location>
</feature>
<feature type="topological domain" description="Periplasmic" evidence="2">
    <location>
        <begin position="197"/>
        <end position="200"/>
    </location>
</feature>
<feature type="transmembrane region" description="Helical" evidence="2">
    <location>
        <begin position="201"/>
        <end position="221"/>
    </location>
</feature>
<feature type="topological domain" description="Cytoplasmic" evidence="2">
    <location>
        <begin position="222"/>
        <end position="237"/>
    </location>
</feature>
<feature type="transmembrane region" description="Helical" evidence="2">
    <location>
        <begin position="238"/>
        <end position="258"/>
    </location>
</feature>
<feature type="topological domain" description="Periplasmic" evidence="2">
    <location>
        <begin position="259"/>
        <end position="262"/>
    </location>
</feature>
<feature type="transmembrane region" description="Helical" evidence="2">
    <location>
        <begin position="263"/>
        <end position="283"/>
    </location>
</feature>
<feature type="topological domain" description="Cytoplasmic" evidence="2">
    <location>
        <begin position="284"/>
        <end position="295"/>
    </location>
</feature>
<feature type="domain" description="EamA 1">
    <location>
        <begin position="30"/>
        <end position="135"/>
    </location>
</feature>
<feature type="domain" description="EamA 2">
    <location>
        <begin position="159"/>
        <end position="278"/>
    </location>
</feature>